<reference key="1">
    <citation type="journal article" date="2003" name="Mol. Microbiol.">
        <title>Genome-based analysis of virulence genes in a non-biofilm-forming Staphylococcus epidermidis strain (ATCC 12228).</title>
        <authorList>
            <person name="Zhang Y.-Q."/>
            <person name="Ren S.-X."/>
            <person name="Li H.-L."/>
            <person name="Wang Y.-X."/>
            <person name="Fu G."/>
            <person name="Yang J."/>
            <person name="Qin Z.-Q."/>
            <person name="Miao Y.-G."/>
            <person name="Wang W.-Y."/>
            <person name="Chen R.-S."/>
            <person name="Shen Y."/>
            <person name="Chen Z."/>
            <person name="Yuan Z.-H."/>
            <person name="Zhao G.-P."/>
            <person name="Qu D."/>
            <person name="Danchin A."/>
            <person name="Wen Y.-M."/>
        </authorList>
    </citation>
    <scope>NUCLEOTIDE SEQUENCE [LARGE SCALE GENOMIC DNA]</scope>
    <source>
        <strain>ATCC 12228 / FDA PCI 1200</strain>
    </source>
</reference>
<feature type="chain" id="PRO_0000339755" description="Xanthine phosphoribosyltransferase">
    <location>
        <begin position="1"/>
        <end position="192"/>
    </location>
</feature>
<feature type="binding site" evidence="1">
    <location>
        <position position="20"/>
    </location>
    <ligand>
        <name>xanthine</name>
        <dbReference type="ChEBI" id="CHEBI:17712"/>
    </ligand>
</feature>
<feature type="binding site" evidence="1">
    <location>
        <position position="27"/>
    </location>
    <ligand>
        <name>xanthine</name>
        <dbReference type="ChEBI" id="CHEBI:17712"/>
    </ligand>
</feature>
<feature type="binding site" evidence="1">
    <location>
        <begin position="128"/>
        <end position="132"/>
    </location>
    <ligand>
        <name>5-phospho-alpha-D-ribose 1-diphosphate</name>
        <dbReference type="ChEBI" id="CHEBI:58017"/>
    </ligand>
</feature>
<feature type="binding site" evidence="1">
    <location>
        <position position="156"/>
    </location>
    <ligand>
        <name>xanthine</name>
        <dbReference type="ChEBI" id="CHEBI:17712"/>
    </ligand>
</feature>
<accession>Q8CQR0</accession>
<name>XPT_STAES</name>
<protein>
    <recommendedName>
        <fullName evidence="1">Xanthine phosphoribosyltransferase</fullName>
        <shortName evidence="1">XPRTase</shortName>
        <ecNumber evidence="1">2.4.2.22</ecNumber>
    </recommendedName>
</protein>
<proteinExistence type="inferred from homology"/>
<comment type="function">
    <text evidence="1">Converts the preformed base xanthine, a product of nucleic acid breakdown, to xanthosine 5'-monophosphate (XMP), so it can be reused for RNA or DNA synthesis.</text>
</comment>
<comment type="catalytic activity">
    <reaction evidence="1">
        <text>XMP + diphosphate = xanthine + 5-phospho-alpha-D-ribose 1-diphosphate</text>
        <dbReference type="Rhea" id="RHEA:10800"/>
        <dbReference type="ChEBI" id="CHEBI:17712"/>
        <dbReference type="ChEBI" id="CHEBI:33019"/>
        <dbReference type="ChEBI" id="CHEBI:57464"/>
        <dbReference type="ChEBI" id="CHEBI:58017"/>
        <dbReference type="EC" id="2.4.2.22"/>
    </reaction>
</comment>
<comment type="pathway">
    <text evidence="1">Purine metabolism; XMP biosynthesis via salvage pathway; XMP from xanthine: step 1/1.</text>
</comment>
<comment type="subunit">
    <text evidence="1">Homodimer.</text>
</comment>
<comment type="subcellular location">
    <subcellularLocation>
        <location evidence="1">Cytoplasm</location>
    </subcellularLocation>
</comment>
<comment type="similarity">
    <text evidence="1">Belongs to the purine/pyrimidine phosphoribosyltransferase family. Xpt subfamily.</text>
</comment>
<sequence length="192" mass="20707">MESLGRKVKEDGVVIDEKILKVDGFLNHQIDAKLMNDVGKTFYESFKDAGITKILTIEASGIAPAIMASFHFDVPCLFAKKAKPSTLKDGFYSTDIHSFTKNKTSTVIVSEEFLGADDKVLIIDDFLANGDASLGLNDIVKQANATTVGVGIVVEKSFQNGRQRLEDAGLYVSSLCKVASLKGNKVTLLGEA</sequence>
<dbReference type="EC" id="2.4.2.22" evidence="1"/>
<dbReference type="EMBL" id="AE015929">
    <property type="protein sequence ID" value="AAO05993.1"/>
    <property type="molecule type" value="Genomic_DNA"/>
</dbReference>
<dbReference type="RefSeq" id="NP_765905.1">
    <property type="nucleotide sequence ID" value="NC_004461.1"/>
</dbReference>
<dbReference type="RefSeq" id="WP_001829410.1">
    <property type="nucleotide sequence ID" value="NZ_WBME01000004.1"/>
</dbReference>
<dbReference type="SMR" id="Q8CQR0"/>
<dbReference type="GeneID" id="50019661"/>
<dbReference type="KEGG" id="sep:SE_2350"/>
<dbReference type="PATRIC" id="fig|176280.10.peg.2293"/>
<dbReference type="eggNOG" id="COG0503">
    <property type="taxonomic scope" value="Bacteria"/>
</dbReference>
<dbReference type="HOGENOM" id="CLU_099015_0_0_9"/>
<dbReference type="OrthoDB" id="9790678at2"/>
<dbReference type="UniPathway" id="UPA00602">
    <property type="reaction ID" value="UER00658"/>
</dbReference>
<dbReference type="Proteomes" id="UP000001411">
    <property type="component" value="Chromosome"/>
</dbReference>
<dbReference type="GO" id="GO:0005737">
    <property type="term" value="C:cytoplasm"/>
    <property type="evidence" value="ECO:0007669"/>
    <property type="project" value="UniProtKB-SubCell"/>
</dbReference>
<dbReference type="GO" id="GO:0000310">
    <property type="term" value="F:xanthine phosphoribosyltransferase activity"/>
    <property type="evidence" value="ECO:0007669"/>
    <property type="project" value="UniProtKB-UniRule"/>
</dbReference>
<dbReference type="GO" id="GO:0006166">
    <property type="term" value="P:purine ribonucleoside salvage"/>
    <property type="evidence" value="ECO:0007669"/>
    <property type="project" value="UniProtKB-KW"/>
</dbReference>
<dbReference type="GO" id="GO:0046110">
    <property type="term" value="P:xanthine metabolic process"/>
    <property type="evidence" value="ECO:0007669"/>
    <property type="project" value="InterPro"/>
</dbReference>
<dbReference type="GO" id="GO:0032265">
    <property type="term" value="P:XMP salvage"/>
    <property type="evidence" value="ECO:0007669"/>
    <property type="project" value="UniProtKB-UniRule"/>
</dbReference>
<dbReference type="CDD" id="cd06223">
    <property type="entry name" value="PRTases_typeI"/>
    <property type="match status" value="1"/>
</dbReference>
<dbReference type="Gene3D" id="3.40.50.2020">
    <property type="match status" value="1"/>
</dbReference>
<dbReference type="HAMAP" id="MF_01184">
    <property type="entry name" value="XPRTase"/>
    <property type="match status" value="1"/>
</dbReference>
<dbReference type="InterPro" id="IPR000836">
    <property type="entry name" value="PRibTrfase_dom"/>
</dbReference>
<dbReference type="InterPro" id="IPR029057">
    <property type="entry name" value="PRTase-like"/>
</dbReference>
<dbReference type="InterPro" id="IPR050118">
    <property type="entry name" value="Pur/Pyrimidine_PRTase"/>
</dbReference>
<dbReference type="InterPro" id="IPR010079">
    <property type="entry name" value="Xanthine_PRibTrfase"/>
</dbReference>
<dbReference type="NCBIfam" id="NF006671">
    <property type="entry name" value="PRK09219.1"/>
    <property type="match status" value="1"/>
</dbReference>
<dbReference type="NCBIfam" id="TIGR01744">
    <property type="entry name" value="XPRTase"/>
    <property type="match status" value="1"/>
</dbReference>
<dbReference type="PANTHER" id="PTHR43864">
    <property type="entry name" value="HYPOXANTHINE/GUANINE PHOSPHORIBOSYLTRANSFERASE"/>
    <property type="match status" value="1"/>
</dbReference>
<dbReference type="PANTHER" id="PTHR43864:SF1">
    <property type="entry name" value="XANTHINE PHOSPHORIBOSYLTRANSFERASE"/>
    <property type="match status" value="1"/>
</dbReference>
<dbReference type="SUPFAM" id="SSF53271">
    <property type="entry name" value="PRTase-like"/>
    <property type="match status" value="1"/>
</dbReference>
<keyword id="KW-0963">Cytoplasm</keyword>
<keyword id="KW-0328">Glycosyltransferase</keyword>
<keyword id="KW-0660">Purine salvage</keyword>
<keyword id="KW-0808">Transferase</keyword>
<gene>
    <name evidence="1" type="primary">xpt</name>
    <name type="ordered locus">SE_2350</name>
</gene>
<organism>
    <name type="scientific">Staphylococcus epidermidis (strain ATCC 12228 / FDA PCI 1200)</name>
    <dbReference type="NCBI Taxonomy" id="176280"/>
    <lineage>
        <taxon>Bacteria</taxon>
        <taxon>Bacillati</taxon>
        <taxon>Bacillota</taxon>
        <taxon>Bacilli</taxon>
        <taxon>Bacillales</taxon>
        <taxon>Staphylococcaceae</taxon>
        <taxon>Staphylococcus</taxon>
    </lineage>
</organism>
<evidence type="ECO:0000255" key="1">
    <source>
        <dbReference type="HAMAP-Rule" id="MF_01184"/>
    </source>
</evidence>